<gene>
    <name type="primary">dys-1</name>
    <name type="ORF">B7F21.30</name>
    <name type="ORF">NCU05418</name>
</gene>
<sequence>MADNQIPSSVADAVLVKSIEMPEGSQKVEELDFNKFKGRPITVDDLLQGMKHMGFQASSMCEAVRIINEMRAYRDPTTSEKTTIFLGYTSNLISSGLRGTLRYLVQHKHVSAIVTTAGGIEEDFIKCLGDTYMSSFSAVGADLRSKGLNRIGNLVVPNSNYCAFEDWVVPILDKMLEEQEASRGTENEINWTPSKVIHRLGKEINDERSVYYWAWKNDIPVFCPALTDGSLGDMLYFHTFKASPKQLRIDIVEDIRKINTIAVRAKRAGMIILGGGIVKHHIANACLMRNGAESAVYINTAQEFDGSDAGARPDEAVSWGKIKVGADAVKVYMEATAAFPFIVANTFAKEDGL</sequence>
<evidence type="ECO:0000250" key="1"/>
<evidence type="ECO:0000305" key="2"/>
<accession>P49365</accession>
<accession>Q7RVI5</accession>
<accession>Q9P3J1</accession>
<proteinExistence type="evidence at protein level"/>
<comment type="function">
    <text>Catalyzes the NAD-dependent oxidative cleavage of spermidine and the subsequent transfer of the butylamine moiety of spermidine to the epsilon-amino group of a specific lysine residue of the eIF-5A precursor protein to form the intermediate deoxyhypusine residue.</text>
</comment>
<comment type="catalytic activity">
    <reaction>
        <text>[eIF5A protein]-L-lysine + spermidine = [eIF5A protein]-deoxyhypusine + propane-1,3-diamine</text>
        <dbReference type="Rhea" id="RHEA:33299"/>
        <dbReference type="Rhea" id="RHEA-COMP:10143"/>
        <dbReference type="Rhea" id="RHEA-COMP:10144"/>
        <dbReference type="ChEBI" id="CHEBI:29969"/>
        <dbReference type="ChEBI" id="CHEBI:57484"/>
        <dbReference type="ChEBI" id="CHEBI:57834"/>
        <dbReference type="ChEBI" id="CHEBI:82657"/>
        <dbReference type="EC" id="2.5.1.46"/>
    </reaction>
</comment>
<comment type="cofactor">
    <cofactor>
        <name>NAD(+)</name>
        <dbReference type="ChEBI" id="CHEBI:57540"/>
    </cofactor>
</comment>
<comment type="pathway">
    <text>Protein modification; eIF5A hypusination.</text>
</comment>
<comment type="subunit">
    <text>Homotetramer.</text>
</comment>
<comment type="similarity">
    <text evidence="2">Belongs to the deoxyhypusine synthase family.</text>
</comment>
<feature type="chain" id="PRO_0000134485" description="Deoxyhypusine synthase">
    <location>
        <begin position="1"/>
        <end position="353"/>
    </location>
</feature>
<feature type="active site" description="Nucleophile" evidence="1">
    <location>
        <position position="321"/>
    </location>
</feature>
<feature type="binding site" evidence="1">
    <location>
        <begin position="90"/>
        <end position="94"/>
    </location>
    <ligand>
        <name>NAD(+)</name>
        <dbReference type="ChEBI" id="CHEBI:57540"/>
    </ligand>
</feature>
<feature type="binding site" evidence="1">
    <location>
        <begin position="116"/>
        <end position="118"/>
    </location>
    <ligand>
        <name>NAD(+)</name>
        <dbReference type="ChEBI" id="CHEBI:57540"/>
    </ligand>
</feature>
<feature type="binding site" evidence="1">
    <location>
        <begin position="121"/>
        <end position="122"/>
    </location>
    <ligand>
        <name>spermidine</name>
        <dbReference type="ChEBI" id="CHEBI:57834"/>
    </ligand>
</feature>
<feature type="binding site" evidence="1">
    <location>
        <position position="122"/>
    </location>
    <ligand>
        <name>NAD(+)</name>
        <dbReference type="ChEBI" id="CHEBI:57540"/>
    </ligand>
</feature>
<feature type="binding site" evidence="1">
    <location>
        <position position="228"/>
    </location>
    <ligand>
        <name>NAD(+)</name>
        <dbReference type="ChEBI" id="CHEBI:57540"/>
    </ligand>
</feature>
<feature type="binding site" evidence="1">
    <location>
        <position position="233"/>
    </location>
    <ligand>
        <name>spermidine</name>
        <dbReference type="ChEBI" id="CHEBI:57834"/>
    </ligand>
</feature>
<feature type="binding site" evidence="1">
    <location>
        <position position="275"/>
    </location>
    <ligand>
        <name>NAD(+)</name>
        <dbReference type="ChEBI" id="CHEBI:57540"/>
    </ligand>
</feature>
<feature type="binding site" evidence="1">
    <location>
        <position position="280"/>
    </location>
    <ligand>
        <name>spermidine</name>
        <dbReference type="ChEBI" id="CHEBI:57834"/>
    </ligand>
</feature>
<feature type="binding site" evidence="1">
    <location>
        <begin position="300"/>
        <end position="301"/>
    </location>
    <ligand>
        <name>NAD(+)</name>
        <dbReference type="ChEBI" id="CHEBI:57540"/>
    </ligand>
</feature>
<feature type="binding site" evidence="1">
    <location>
        <begin position="306"/>
        <end position="308"/>
    </location>
    <ligand>
        <name>spermidine</name>
        <dbReference type="ChEBI" id="CHEBI:57834"/>
    </ligand>
</feature>
<feature type="binding site" evidence="1">
    <location>
        <begin position="315"/>
        <end position="321"/>
    </location>
    <ligand>
        <name>spermidine</name>
        <dbReference type="ChEBI" id="CHEBI:57834"/>
    </ligand>
</feature>
<feature type="binding site" evidence="1">
    <location>
        <begin position="334"/>
        <end position="335"/>
    </location>
    <ligand>
        <name>NAD(+)</name>
        <dbReference type="ChEBI" id="CHEBI:57540"/>
    </ligand>
</feature>
<feature type="sequence conflict" description="In Ref. 1; AAC49075." evidence="2" ref="1">
    <original>K</original>
    <variation>E</variation>
    <location>
        <position position="245"/>
    </location>
</feature>
<feature type="sequence conflict" description="In Ref. 1; AAC49075." evidence="2" ref="1">
    <original>A</original>
    <variation>S</variation>
    <location>
        <position position="311"/>
    </location>
</feature>
<protein>
    <recommendedName>
        <fullName>Deoxyhypusine synthase</fullName>
        <shortName>DHS</shortName>
        <ecNumber>2.5.1.46</ecNumber>
    </recommendedName>
</protein>
<name>DHYS_NEUCR</name>
<organism>
    <name type="scientific">Neurospora crassa (strain ATCC 24698 / 74-OR23-1A / CBS 708.71 / DSM 1257 / FGSC 987)</name>
    <dbReference type="NCBI Taxonomy" id="367110"/>
    <lineage>
        <taxon>Eukaryota</taxon>
        <taxon>Fungi</taxon>
        <taxon>Dikarya</taxon>
        <taxon>Ascomycota</taxon>
        <taxon>Pezizomycotina</taxon>
        <taxon>Sordariomycetes</taxon>
        <taxon>Sordariomycetidae</taxon>
        <taxon>Sordariales</taxon>
        <taxon>Sordariaceae</taxon>
        <taxon>Neurospora</taxon>
    </lineage>
</organism>
<keyword id="KW-0903">Direct protein sequencing</keyword>
<keyword id="KW-0386">Hypusine biosynthesis</keyword>
<keyword id="KW-0520">NAD</keyword>
<keyword id="KW-1185">Reference proteome</keyword>
<keyword id="KW-0808">Transferase</keyword>
<reference key="1">
    <citation type="journal article" date="1995" name="J. Biol. Chem.">
        <title>Molecular cloning and functional expression of Neurospora deoxyhypusine synthase cDNA and identification of yeast deoxyhypusine synthase cDNA.</title>
        <authorList>
            <person name="Tao Y."/>
            <person name="Chen K.Y."/>
        </authorList>
    </citation>
    <scope>NUCLEOTIDE SEQUENCE [MRNA]</scope>
</reference>
<reference key="2">
    <citation type="journal article" date="2003" name="Nucleic Acids Res.">
        <title>What's in the genome of a filamentous fungus? Analysis of the Neurospora genome sequence.</title>
        <authorList>
            <person name="Mannhaupt G."/>
            <person name="Montrone C."/>
            <person name="Haase D."/>
            <person name="Mewes H.-W."/>
            <person name="Aign V."/>
            <person name="Hoheisel J.D."/>
            <person name="Fartmann B."/>
            <person name="Nyakatura G."/>
            <person name="Kempken F."/>
            <person name="Maier J."/>
            <person name="Schulte U."/>
        </authorList>
    </citation>
    <scope>NUCLEOTIDE SEQUENCE [LARGE SCALE GENOMIC DNA]</scope>
    <source>
        <strain>ATCC 24698 / 74-OR23-1A / CBS 708.71 / DSM 1257 / FGSC 987</strain>
    </source>
</reference>
<reference key="3">
    <citation type="journal article" date="2003" name="Nature">
        <title>The genome sequence of the filamentous fungus Neurospora crassa.</title>
        <authorList>
            <person name="Galagan J.E."/>
            <person name="Calvo S.E."/>
            <person name="Borkovich K.A."/>
            <person name="Selker E.U."/>
            <person name="Read N.D."/>
            <person name="Jaffe D.B."/>
            <person name="FitzHugh W."/>
            <person name="Ma L.-J."/>
            <person name="Smirnov S."/>
            <person name="Purcell S."/>
            <person name="Rehman B."/>
            <person name="Elkins T."/>
            <person name="Engels R."/>
            <person name="Wang S."/>
            <person name="Nielsen C.B."/>
            <person name="Butler J."/>
            <person name="Endrizzi M."/>
            <person name="Qui D."/>
            <person name="Ianakiev P."/>
            <person name="Bell-Pedersen D."/>
            <person name="Nelson M.A."/>
            <person name="Werner-Washburne M."/>
            <person name="Selitrennikoff C.P."/>
            <person name="Kinsey J.A."/>
            <person name="Braun E.L."/>
            <person name="Zelter A."/>
            <person name="Schulte U."/>
            <person name="Kothe G.O."/>
            <person name="Jedd G."/>
            <person name="Mewes H.-W."/>
            <person name="Staben C."/>
            <person name="Marcotte E."/>
            <person name="Greenberg D."/>
            <person name="Roy A."/>
            <person name="Foley K."/>
            <person name="Naylor J."/>
            <person name="Stange-Thomann N."/>
            <person name="Barrett R."/>
            <person name="Gnerre S."/>
            <person name="Kamal M."/>
            <person name="Kamvysselis M."/>
            <person name="Mauceli E.W."/>
            <person name="Bielke C."/>
            <person name="Rudd S."/>
            <person name="Frishman D."/>
            <person name="Krystofova S."/>
            <person name="Rasmussen C."/>
            <person name="Metzenberg R.L."/>
            <person name="Perkins D.D."/>
            <person name="Kroken S."/>
            <person name="Cogoni C."/>
            <person name="Macino G."/>
            <person name="Catcheside D.E.A."/>
            <person name="Li W."/>
            <person name="Pratt R.J."/>
            <person name="Osmani S.A."/>
            <person name="DeSouza C.P.C."/>
            <person name="Glass N.L."/>
            <person name="Orbach M.J."/>
            <person name="Berglund J.A."/>
            <person name="Voelker R."/>
            <person name="Yarden O."/>
            <person name="Plamann M."/>
            <person name="Seiler S."/>
            <person name="Dunlap J.C."/>
            <person name="Radford A."/>
            <person name="Aramayo R."/>
            <person name="Natvig D.O."/>
            <person name="Alex L.A."/>
            <person name="Mannhaupt G."/>
            <person name="Ebbole D.J."/>
            <person name="Freitag M."/>
            <person name="Paulsen I."/>
            <person name="Sachs M.S."/>
            <person name="Lander E.S."/>
            <person name="Nusbaum C."/>
            <person name="Birren B.W."/>
        </authorList>
    </citation>
    <scope>NUCLEOTIDE SEQUENCE [LARGE SCALE GENOMIC DNA]</scope>
    <source>
        <strain>ATCC 24698 / 74-OR23-1A / CBS 708.71 / DSM 1257 / FGSC 987</strain>
    </source>
</reference>
<reference key="4">
    <citation type="journal article" date="1995" name="J. Biol. Chem.">
        <title>Purification of deoxyhypusine synthase from Neurospora crassa to homogeneity by substrate elution affinity chromatography.</title>
        <authorList>
            <person name="Tao Y."/>
            <person name="Chen K.Y."/>
        </authorList>
    </citation>
    <scope>PROTEIN SEQUENCE OF 109-126; 151-171; 217-236 AND 290-305</scope>
    <scope>CHARACTERIZATION</scope>
</reference>
<dbReference type="EC" id="2.5.1.46"/>
<dbReference type="EMBL" id="U22400">
    <property type="protein sequence ID" value="AAC49075.1"/>
    <property type="molecule type" value="mRNA"/>
</dbReference>
<dbReference type="EMBL" id="AL389901">
    <property type="protein sequence ID" value="CAB97475.1"/>
    <property type="molecule type" value="Genomic_DNA"/>
</dbReference>
<dbReference type="EMBL" id="CM002237">
    <property type="protein sequence ID" value="EAA34005.1"/>
    <property type="molecule type" value="Genomic_DNA"/>
</dbReference>
<dbReference type="PIR" id="T47195">
    <property type="entry name" value="T47195"/>
</dbReference>
<dbReference type="PIR" id="T51022">
    <property type="entry name" value="T51022"/>
</dbReference>
<dbReference type="RefSeq" id="XP_963241.1">
    <property type="nucleotide sequence ID" value="XM_958148.2"/>
</dbReference>
<dbReference type="SMR" id="P49365"/>
<dbReference type="FunCoup" id="P49365">
    <property type="interactions" value="678"/>
</dbReference>
<dbReference type="STRING" id="367110.P49365"/>
<dbReference type="PaxDb" id="5141-EFNCRP00000006511"/>
<dbReference type="EnsemblFungi" id="EAA34005">
    <property type="protein sequence ID" value="EAA34005"/>
    <property type="gene ID" value="NCU05418"/>
</dbReference>
<dbReference type="GeneID" id="3879389"/>
<dbReference type="KEGG" id="ncr:NCU05418"/>
<dbReference type="VEuPathDB" id="FungiDB:NCU05418"/>
<dbReference type="HOGENOM" id="CLU_039781_0_0_1"/>
<dbReference type="InParanoid" id="P49365"/>
<dbReference type="OMA" id="HSIINAN"/>
<dbReference type="OrthoDB" id="294378at2759"/>
<dbReference type="BRENDA" id="2.5.1.46">
    <property type="organism ID" value="3627"/>
</dbReference>
<dbReference type="UniPathway" id="UPA00354"/>
<dbReference type="Proteomes" id="UP000001805">
    <property type="component" value="Chromosome 6, Linkage Group II"/>
</dbReference>
<dbReference type="GO" id="GO:0005737">
    <property type="term" value="C:cytoplasm"/>
    <property type="evidence" value="ECO:0000318"/>
    <property type="project" value="GO_Central"/>
</dbReference>
<dbReference type="GO" id="GO:0034038">
    <property type="term" value="F:deoxyhypusine synthase activity"/>
    <property type="evidence" value="ECO:0000318"/>
    <property type="project" value="GO_Central"/>
</dbReference>
<dbReference type="GO" id="GO:0008216">
    <property type="term" value="P:spermidine metabolic process"/>
    <property type="evidence" value="ECO:0000318"/>
    <property type="project" value="GO_Central"/>
</dbReference>
<dbReference type="FunFam" id="3.40.910.10:FF:000003">
    <property type="entry name" value="Deoxyhypusine synthase"/>
    <property type="match status" value="1"/>
</dbReference>
<dbReference type="Gene3D" id="3.40.910.10">
    <property type="entry name" value="Deoxyhypusine synthase"/>
    <property type="match status" value="1"/>
</dbReference>
<dbReference type="InterPro" id="IPR002773">
    <property type="entry name" value="Deoxyhypusine_synthase"/>
</dbReference>
<dbReference type="InterPro" id="IPR036982">
    <property type="entry name" value="Deoxyhypusine_synthase_sf"/>
</dbReference>
<dbReference type="InterPro" id="IPR029035">
    <property type="entry name" value="DHS-like_NAD/FAD-binding_dom"/>
</dbReference>
<dbReference type="NCBIfam" id="TIGR00321">
    <property type="entry name" value="dhys"/>
    <property type="match status" value="1"/>
</dbReference>
<dbReference type="PANTHER" id="PTHR11703">
    <property type="entry name" value="DEOXYHYPUSINE SYNTHASE"/>
    <property type="match status" value="1"/>
</dbReference>
<dbReference type="PANTHER" id="PTHR11703:SF0">
    <property type="entry name" value="DEOXYHYPUSINE SYNTHASE"/>
    <property type="match status" value="1"/>
</dbReference>
<dbReference type="Pfam" id="PF01916">
    <property type="entry name" value="DS"/>
    <property type="match status" value="1"/>
</dbReference>
<dbReference type="SUPFAM" id="SSF52467">
    <property type="entry name" value="DHS-like NAD/FAD-binding domain"/>
    <property type="match status" value="1"/>
</dbReference>